<keyword id="KW-0687">Ribonucleoprotein</keyword>
<keyword id="KW-0689">Ribosomal protein</keyword>
<comment type="similarity">
    <text evidence="1">Belongs to the bacterial ribosomal protein bL27 family.</text>
</comment>
<organism>
    <name type="scientific">Leptospira biflexa serovar Patoc (strain Patoc 1 / Ames)</name>
    <dbReference type="NCBI Taxonomy" id="355278"/>
    <lineage>
        <taxon>Bacteria</taxon>
        <taxon>Pseudomonadati</taxon>
        <taxon>Spirochaetota</taxon>
        <taxon>Spirochaetia</taxon>
        <taxon>Leptospirales</taxon>
        <taxon>Leptospiraceae</taxon>
        <taxon>Leptospira</taxon>
    </lineage>
</organism>
<dbReference type="EMBL" id="CP000777">
    <property type="protein sequence ID" value="ABZ94229.1"/>
    <property type="molecule type" value="Genomic_DNA"/>
</dbReference>
<dbReference type="RefSeq" id="WP_012388759.1">
    <property type="nucleotide sequence ID" value="NC_010842.1"/>
</dbReference>
<dbReference type="SMR" id="B0S9A2"/>
<dbReference type="KEGG" id="lbf:LBF_1722"/>
<dbReference type="HOGENOM" id="CLU_095424_4_0_12"/>
<dbReference type="GO" id="GO:1990904">
    <property type="term" value="C:ribonucleoprotein complex"/>
    <property type="evidence" value="ECO:0007669"/>
    <property type="project" value="UniProtKB-KW"/>
</dbReference>
<dbReference type="GO" id="GO:0005840">
    <property type="term" value="C:ribosome"/>
    <property type="evidence" value="ECO:0007669"/>
    <property type="project" value="UniProtKB-KW"/>
</dbReference>
<dbReference type="GO" id="GO:0003735">
    <property type="term" value="F:structural constituent of ribosome"/>
    <property type="evidence" value="ECO:0007669"/>
    <property type="project" value="InterPro"/>
</dbReference>
<dbReference type="GO" id="GO:0006412">
    <property type="term" value="P:translation"/>
    <property type="evidence" value="ECO:0007669"/>
    <property type="project" value="UniProtKB-UniRule"/>
</dbReference>
<dbReference type="FunFam" id="2.40.50.100:FF:000004">
    <property type="entry name" value="50S ribosomal protein L27"/>
    <property type="match status" value="1"/>
</dbReference>
<dbReference type="Gene3D" id="2.40.50.100">
    <property type="match status" value="1"/>
</dbReference>
<dbReference type="HAMAP" id="MF_00539">
    <property type="entry name" value="Ribosomal_bL27"/>
    <property type="match status" value="1"/>
</dbReference>
<dbReference type="InterPro" id="IPR001684">
    <property type="entry name" value="Ribosomal_bL27"/>
</dbReference>
<dbReference type="InterPro" id="IPR018261">
    <property type="entry name" value="Ribosomal_bL27_CS"/>
</dbReference>
<dbReference type="NCBIfam" id="TIGR00062">
    <property type="entry name" value="L27"/>
    <property type="match status" value="1"/>
</dbReference>
<dbReference type="PANTHER" id="PTHR15893:SF0">
    <property type="entry name" value="LARGE RIBOSOMAL SUBUNIT PROTEIN BL27M"/>
    <property type="match status" value="1"/>
</dbReference>
<dbReference type="PANTHER" id="PTHR15893">
    <property type="entry name" value="RIBOSOMAL PROTEIN L27"/>
    <property type="match status" value="1"/>
</dbReference>
<dbReference type="Pfam" id="PF01016">
    <property type="entry name" value="Ribosomal_L27"/>
    <property type="match status" value="1"/>
</dbReference>
<dbReference type="PRINTS" id="PR00063">
    <property type="entry name" value="RIBOSOMALL27"/>
</dbReference>
<dbReference type="SUPFAM" id="SSF110324">
    <property type="entry name" value="Ribosomal L27 protein-like"/>
    <property type="match status" value="1"/>
</dbReference>
<dbReference type="PROSITE" id="PS00831">
    <property type="entry name" value="RIBOSOMAL_L27"/>
    <property type="match status" value="1"/>
</dbReference>
<sequence>MATKKGGGSTKNGRDSVSKRLGVKVYGGQQAIAGNIIVRQRGTEYKPGKNVGIGRDHTLYALVDGIVTFEHVTKERQQISVYPKV</sequence>
<proteinExistence type="inferred from homology"/>
<name>RL27_LEPBA</name>
<feature type="chain" id="PRO_1000128766" description="Large ribosomal subunit protein bL27">
    <location>
        <begin position="1"/>
        <end position="85"/>
    </location>
</feature>
<gene>
    <name evidence="1" type="primary">rpmA</name>
    <name type="ordered locus">LBF_1722</name>
</gene>
<accession>B0S9A2</accession>
<reference key="1">
    <citation type="journal article" date="2008" name="PLoS ONE">
        <title>Genome sequence of the saprophyte Leptospira biflexa provides insights into the evolution of Leptospira and the pathogenesis of leptospirosis.</title>
        <authorList>
            <person name="Picardeau M."/>
            <person name="Bulach D.M."/>
            <person name="Bouchier C."/>
            <person name="Zuerner R.L."/>
            <person name="Zidane N."/>
            <person name="Wilson P.J."/>
            <person name="Creno S."/>
            <person name="Kuczek E.S."/>
            <person name="Bommezzadri S."/>
            <person name="Davis J.C."/>
            <person name="McGrath A."/>
            <person name="Johnson M.J."/>
            <person name="Boursaux-Eude C."/>
            <person name="Seemann T."/>
            <person name="Rouy Z."/>
            <person name="Coppel R.L."/>
            <person name="Rood J.I."/>
            <person name="Lajus A."/>
            <person name="Davies J.K."/>
            <person name="Medigue C."/>
            <person name="Adler B."/>
        </authorList>
    </citation>
    <scope>NUCLEOTIDE SEQUENCE [LARGE SCALE GENOMIC DNA]</scope>
    <source>
        <strain>Patoc 1 / Ames</strain>
    </source>
</reference>
<protein>
    <recommendedName>
        <fullName evidence="1">Large ribosomal subunit protein bL27</fullName>
    </recommendedName>
    <alternativeName>
        <fullName evidence="2">50S ribosomal protein L27</fullName>
    </alternativeName>
</protein>
<evidence type="ECO:0000255" key="1">
    <source>
        <dbReference type="HAMAP-Rule" id="MF_00539"/>
    </source>
</evidence>
<evidence type="ECO:0000305" key="2"/>